<gene>
    <name type="ORF">a79</name>
</gene>
<organism>
    <name type="scientific">Sulfolobus spindle-shape virus 1</name>
    <name type="common">SSV1</name>
    <dbReference type="NCBI Taxonomy" id="244589"/>
    <lineage>
        <taxon>Viruses</taxon>
        <taxon>Viruses incertae sedis</taxon>
        <taxon>Fuselloviridae</taxon>
        <taxon>Alphafusellovirus</taxon>
    </lineage>
</organism>
<name>A79_SSV1</name>
<keyword id="KW-1185">Reference proteome</keyword>
<accession>P20199</accession>
<proteinExistence type="predicted"/>
<sequence>MFRCPICGFKTLRLFALKQHTRREHVLVKCPICGFTGKHLSQHFYSRYDIDHLIYCYLFSSFRLPKNVRLAIKRKLEVE</sequence>
<protein>
    <recommendedName>
        <fullName>Uncharacterized protein A-79</fullName>
    </recommendedName>
</protein>
<reference key="1">
    <citation type="journal article" date="1991" name="Virology">
        <title>Complete nucleotide sequence of the virus SSV1 of the archaebacterium Sulfolobus shibatae.</title>
        <authorList>
            <person name="Palm P."/>
            <person name="Schleper C."/>
            <person name="Grampp B."/>
            <person name="Yeats S."/>
            <person name="McWilliam P."/>
            <person name="Reiter W.-D."/>
            <person name="Zillig W."/>
        </authorList>
    </citation>
    <scope>NUCLEOTIDE SEQUENCE [GENOMIC DNA]</scope>
</reference>
<organismHost>
    <name type="scientific">Saccharolobus solfataricus</name>
    <name type="common">Sulfolobus solfataricus</name>
    <dbReference type="NCBI Taxonomy" id="2287"/>
</organismHost>
<feature type="chain" id="PRO_0000223036" description="Uncharacterized protein A-79">
    <location>
        <begin position="1"/>
        <end position="79"/>
    </location>
</feature>
<dbReference type="EMBL" id="X07234">
    <property type="protein sequence ID" value="CAA30194.1"/>
    <property type="molecule type" value="Genomic_DNA"/>
</dbReference>
<dbReference type="PIR" id="S03226">
    <property type="entry name" value="S03226"/>
</dbReference>
<dbReference type="RefSeq" id="NP_039792.1">
    <property type="nucleotide sequence ID" value="NC_001338.1"/>
</dbReference>
<dbReference type="KEGG" id="vg:2559645"/>
<dbReference type="OrthoDB" id="22332at10239"/>
<dbReference type="Proteomes" id="UP000000854">
    <property type="component" value="Genome"/>
</dbReference>
<dbReference type="Gene3D" id="3.30.160.60">
    <property type="entry name" value="Classic Zinc Finger"/>
    <property type="match status" value="1"/>
</dbReference>
<dbReference type="InterPro" id="IPR013087">
    <property type="entry name" value="Znf_C2H2_type"/>
</dbReference>
<dbReference type="SMART" id="SM00355">
    <property type="entry name" value="ZnF_C2H2"/>
    <property type="match status" value="2"/>
</dbReference>